<reference key="1">
    <citation type="journal article" date="2008" name="Proc. Natl. Acad. Sci. U.S.A.">
        <title>The genome sequence of Bifidobacterium longum subsp. infantis reveals adaptations for milk utilization within the infant microbiome.</title>
        <authorList>
            <person name="Sela D.A."/>
            <person name="Chapman J."/>
            <person name="Adeuya A."/>
            <person name="Kim J.H."/>
            <person name="Chen F."/>
            <person name="Whitehead T.R."/>
            <person name="Lapidus A."/>
            <person name="Rokhsar D.S."/>
            <person name="Lebrilla C.B."/>
            <person name="German J.B."/>
            <person name="Price N.P."/>
            <person name="Richardson P.M."/>
            <person name="Mills D.A."/>
        </authorList>
    </citation>
    <scope>NUCLEOTIDE SEQUENCE [LARGE SCALE GENOMIC DNA]</scope>
    <source>
        <strain>ATCC 15697 / DSM 20088 / JCM 1222 / NCTC 11817 / S12</strain>
    </source>
</reference>
<reference key="2">
    <citation type="journal article" date="2011" name="Nature">
        <title>Bifidobacteria can protect from enteropathogenic infection through production of acetate.</title>
        <authorList>
            <person name="Fukuda S."/>
            <person name="Toh H."/>
            <person name="Hase K."/>
            <person name="Oshima K."/>
            <person name="Nakanishi Y."/>
            <person name="Yoshimura K."/>
            <person name="Tobe T."/>
            <person name="Clarke J.M."/>
            <person name="Topping D.L."/>
            <person name="Suzuki T."/>
            <person name="Taylor T.D."/>
            <person name="Itoh K."/>
            <person name="Kikuchi J."/>
            <person name="Morita H."/>
            <person name="Hattori M."/>
            <person name="Ohno H."/>
        </authorList>
    </citation>
    <scope>NUCLEOTIDE SEQUENCE [LARGE SCALE GENOMIC DNA]</scope>
    <source>
        <strain>ATCC 15697 / DSM 20088 / JCM 1222 / NCTC 11817 / S12</strain>
    </source>
</reference>
<keyword id="KW-0067">ATP-binding</keyword>
<keyword id="KW-0436">Ligase</keyword>
<keyword id="KW-0460">Magnesium</keyword>
<keyword id="KW-0479">Metal-binding</keyword>
<keyword id="KW-0547">Nucleotide-binding</keyword>
<keyword id="KW-0833">Ubl conjugation pathway</keyword>
<comment type="function">
    <text evidence="1">Catalyzes the covalent attachment of the prokaryotic ubiquitin-like protein modifier Pup to the proteasomal substrate proteins, thereby targeting them for proteasomal degradation. This tagging system is termed pupylation. The ligation reaction involves the side-chain carboxylate of the C-terminal glutamate of Pup and the side-chain amino group of a substrate lysine.</text>
</comment>
<comment type="catalytic activity">
    <reaction evidence="1">
        <text>ATP + [prokaryotic ubiquitin-like protein]-L-glutamate + [protein]-L-lysine = ADP + phosphate + N(6)-([prokaryotic ubiquitin-like protein]-gamma-L-glutamyl)-[protein]-L-lysine.</text>
        <dbReference type="EC" id="6.3.1.19"/>
    </reaction>
</comment>
<comment type="pathway">
    <text evidence="1">Protein degradation; proteasomal Pup-dependent pathway.</text>
</comment>
<comment type="pathway">
    <text evidence="1">Protein modification; protein pupylation.</text>
</comment>
<comment type="miscellaneous">
    <text evidence="1">The reaction mechanism probably proceeds via the activation of Pup by phosphorylation of its C-terminal glutamate, which is then subject to nucleophilic attack by the substrate lysine, resulting in an isopeptide bond and the release of phosphate as a good leaving group.</text>
</comment>
<comment type="similarity">
    <text evidence="1">Belongs to the Pup ligase/Pup deamidase family. Pup-conjugating enzyme subfamily.</text>
</comment>
<accession>B7GUN9</accession>
<accession>E8MMK1</accession>
<organism>
    <name type="scientific">Bifidobacterium longum subsp. infantis (strain ATCC 15697 / DSM 20088 / JCM 1222 / NCTC 11817 / S12)</name>
    <dbReference type="NCBI Taxonomy" id="391904"/>
    <lineage>
        <taxon>Bacteria</taxon>
        <taxon>Bacillati</taxon>
        <taxon>Actinomycetota</taxon>
        <taxon>Actinomycetes</taxon>
        <taxon>Bifidobacteriales</taxon>
        <taxon>Bifidobacteriaceae</taxon>
        <taxon>Bifidobacterium</taxon>
    </lineage>
</organism>
<evidence type="ECO:0000255" key="1">
    <source>
        <dbReference type="HAMAP-Rule" id="MF_02111"/>
    </source>
</evidence>
<protein>
    <recommendedName>
        <fullName evidence="1">Pup--protein ligase</fullName>
        <ecNumber evidence="1">6.3.1.19</ecNumber>
    </recommendedName>
    <alternativeName>
        <fullName evidence="1">Proteasome accessory factor A</fullName>
    </alternativeName>
    <alternativeName>
        <fullName evidence="1">Pup-conjugating enzyme</fullName>
    </alternativeName>
</protein>
<gene>
    <name evidence="1" type="primary">pafA</name>
    <name type="ordered locus">Blon_2124</name>
    <name type="ordered locus">BLIJ_2201</name>
</gene>
<name>PAFA_BIFLS</name>
<dbReference type="EC" id="6.3.1.19" evidence="1"/>
<dbReference type="EMBL" id="CP001095">
    <property type="protein sequence ID" value="ACJ53185.1"/>
    <property type="molecule type" value="Genomic_DNA"/>
</dbReference>
<dbReference type="EMBL" id="AP010889">
    <property type="protein sequence ID" value="BAJ69778.1"/>
    <property type="molecule type" value="Genomic_DNA"/>
</dbReference>
<dbReference type="RefSeq" id="WP_012578389.1">
    <property type="nucleotide sequence ID" value="NZ_JDTT01000015.1"/>
</dbReference>
<dbReference type="SMR" id="B7GUN9"/>
<dbReference type="KEGG" id="bln:Blon_2124"/>
<dbReference type="KEGG" id="blon:BLIJ_2201"/>
<dbReference type="PATRIC" id="fig|391904.8.peg.2203"/>
<dbReference type="HOGENOM" id="CLU_040524_0_1_11"/>
<dbReference type="UniPathway" id="UPA00997"/>
<dbReference type="UniPathway" id="UPA00998"/>
<dbReference type="Proteomes" id="UP000001360">
    <property type="component" value="Chromosome"/>
</dbReference>
<dbReference type="GO" id="GO:0005524">
    <property type="term" value="F:ATP binding"/>
    <property type="evidence" value="ECO:0007669"/>
    <property type="project" value="UniProtKB-UniRule"/>
</dbReference>
<dbReference type="GO" id="GO:0016879">
    <property type="term" value="F:ligase activity, forming carbon-nitrogen bonds"/>
    <property type="evidence" value="ECO:0007669"/>
    <property type="project" value="InterPro"/>
</dbReference>
<dbReference type="GO" id="GO:0000287">
    <property type="term" value="F:magnesium ion binding"/>
    <property type="evidence" value="ECO:0007669"/>
    <property type="project" value="UniProtKB-UniRule"/>
</dbReference>
<dbReference type="GO" id="GO:0019787">
    <property type="term" value="F:ubiquitin-like protein transferase activity"/>
    <property type="evidence" value="ECO:0007669"/>
    <property type="project" value="UniProtKB-UniRule"/>
</dbReference>
<dbReference type="GO" id="GO:0019941">
    <property type="term" value="P:modification-dependent protein catabolic process"/>
    <property type="evidence" value="ECO:0007669"/>
    <property type="project" value="UniProtKB-UniRule"/>
</dbReference>
<dbReference type="GO" id="GO:0010498">
    <property type="term" value="P:proteasomal protein catabolic process"/>
    <property type="evidence" value="ECO:0007669"/>
    <property type="project" value="UniProtKB-UniRule"/>
</dbReference>
<dbReference type="GO" id="GO:0070490">
    <property type="term" value="P:protein pupylation"/>
    <property type="evidence" value="ECO:0007669"/>
    <property type="project" value="UniProtKB-UniRule"/>
</dbReference>
<dbReference type="HAMAP" id="MF_02111">
    <property type="entry name" value="Pup_ligase"/>
    <property type="match status" value="1"/>
</dbReference>
<dbReference type="InterPro" id="IPR022279">
    <property type="entry name" value="Pup_ligase"/>
</dbReference>
<dbReference type="InterPro" id="IPR004347">
    <property type="entry name" value="Pup_ligase/deamidase"/>
</dbReference>
<dbReference type="NCBIfam" id="TIGR03686">
    <property type="entry name" value="pupylate_PafA"/>
    <property type="match status" value="1"/>
</dbReference>
<dbReference type="PANTHER" id="PTHR42307">
    <property type="entry name" value="PUP DEAMIDASE/DEPUPYLASE"/>
    <property type="match status" value="1"/>
</dbReference>
<dbReference type="PANTHER" id="PTHR42307:SF3">
    <property type="entry name" value="PUP--PROTEIN LIGASE"/>
    <property type="match status" value="1"/>
</dbReference>
<dbReference type="Pfam" id="PF03136">
    <property type="entry name" value="Pup_ligase"/>
    <property type="match status" value="1"/>
</dbReference>
<dbReference type="PIRSF" id="PIRSF018077">
    <property type="entry name" value="UCP018077"/>
    <property type="match status" value="1"/>
</dbReference>
<sequence>MPQLRDSGTRSLHATEPVPSAEMDGFCRIFGVETEYGVAVTGAERPVDAGQVAMTMFQPIVSRSRSTNTYLANGSRLYLDVGSHPEYATAEARDPREALGQDLAGEHVMRNLALKAQRKLRESYSEHATIHVFKNNVDSAGHAFGCHENYLVRRFVPLETIEHQLLPFLITRQLYTGAGRMTPDGFQITQRADFLDEAVSSATTRSRPMVNTRDEPHADPDSFRRLHVIIGDSNRSQWSTWMKLAVTHLVLCAIEDAFRLGTPSGFEHCAFADPAAANRTVSRFLDDPHAELTLESGESVSALGLQRRYYAAVKAFIETHGDALASSLPATTIVTIMGEWSRVLDALERGAYDALADRVDWAAKKRLFDALKRRRPDVTFAQMEQLELDYHDIANGRLYGSLTSRNQMRELLTGDDVEYAVHNPPTDTRAALRGRFVDAALNVGAQFSADWTHLTLTAPERREAILLDPFEAEPTPEFEQLMEAL</sequence>
<feature type="chain" id="PRO_0000395902" description="Pup--protein ligase">
    <location>
        <begin position="1"/>
        <end position="485"/>
    </location>
</feature>
<feature type="active site" description="Proton acceptor" evidence="1">
    <location>
        <position position="80"/>
    </location>
</feature>
<feature type="binding site" evidence="1">
    <location>
        <position position="33"/>
    </location>
    <ligand>
        <name>Mg(2+)</name>
        <dbReference type="ChEBI" id="CHEBI:18420"/>
    </ligand>
</feature>
<feature type="binding site" evidence="1">
    <location>
        <position position="76"/>
    </location>
    <ligand>
        <name>ATP</name>
        <dbReference type="ChEBI" id="CHEBI:30616"/>
    </ligand>
</feature>
<feature type="binding site" evidence="1">
    <location>
        <position position="78"/>
    </location>
    <ligand>
        <name>Mg(2+)</name>
        <dbReference type="ChEBI" id="CHEBI:18420"/>
    </ligand>
</feature>
<feature type="binding site" evidence="1">
    <location>
        <position position="86"/>
    </location>
    <ligand>
        <name>Mg(2+)</name>
        <dbReference type="ChEBI" id="CHEBI:18420"/>
    </ligand>
</feature>
<feature type="binding site" evidence="1">
    <location>
        <position position="89"/>
    </location>
    <ligand>
        <name>ATP</name>
        <dbReference type="ChEBI" id="CHEBI:30616"/>
    </ligand>
</feature>
<feature type="binding site" evidence="1">
    <location>
        <position position="451"/>
    </location>
    <ligand>
        <name>ATP</name>
        <dbReference type="ChEBI" id="CHEBI:30616"/>
    </ligand>
</feature>
<proteinExistence type="inferred from homology"/>